<name>RS9_STRP8</name>
<sequence>MAQAQYAGTGRRKNAVARVRLVPGTGKITVNKKDVEEYIPHADLRLIINQPFAVTSTEGSYDVFVNVVGGGYGGQSGAIRHGIARALLQVDPDFRDSLKRAGLLTRDARMVERKKPGLKKARKASQFSKR</sequence>
<gene>
    <name evidence="1" type="primary">rpsI</name>
    <name evidence="1" type="synonym">rps9</name>
    <name type="ordered locus">spyM18_1999</name>
</gene>
<accession>P66650</accession>
<accession>Q99Y08</accession>
<keyword id="KW-0687">Ribonucleoprotein</keyword>
<keyword id="KW-0689">Ribosomal protein</keyword>
<feature type="chain" id="PRO_0000111425" description="Small ribosomal subunit protein uS9">
    <location>
        <begin position="1"/>
        <end position="130"/>
    </location>
</feature>
<dbReference type="EMBL" id="AE009949">
    <property type="protein sequence ID" value="AAL98480.1"/>
    <property type="molecule type" value="Genomic_DNA"/>
</dbReference>
<dbReference type="RefSeq" id="WP_002982716.1">
    <property type="nucleotide sequence ID" value="NC_003485.1"/>
</dbReference>
<dbReference type="SMR" id="P66650"/>
<dbReference type="GeneID" id="83689365"/>
<dbReference type="KEGG" id="spm:spyM18_1999"/>
<dbReference type="HOGENOM" id="CLU_046483_2_1_9"/>
<dbReference type="GO" id="GO:0022627">
    <property type="term" value="C:cytosolic small ribosomal subunit"/>
    <property type="evidence" value="ECO:0007669"/>
    <property type="project" value="TreeGrafter"/>
</dbReference>
<dbReference type="GO" id="GO:0003723">
    <property type="term" value="F:RNA binding"/>
    <property type="evidence" value="ECO:0007669"/>
    <property type="project" value="TreeGrafter"/>
</dbReference>
<dbReference type="GO" id="GO:0003735">
    <property type="term" value="F:structural constituent of ribosome"/>
    <property type="evidence" value="ECO:0007669"/>
    <property type="project" value="InterPro"/>
</dbReference>
<dbReference type="GO" id="GO:0006412">
    <property type="term" value="P:translation"/>
    <property type="evidence" value="ECO:0007669"/>
    <property type="project" value="UniProtKB-UniRule"/>
</dbReference>
<dbReference type="FunFam" id="3.30.230.10:FF:000001">
    <property type="entry name" value="30S ribosomal protein S9"/>
    <property type="match status" value="1"/>
</dbReference>
<dbReference type="Gene3D" id="3.30.230.10">
    <property type="match status" value="1"/>
</dbReference>
<dbReference type="HAMAP" id="MF_00532_B">
    <property type="entry name" value="Ribosomal_uS9_B"/>
    <property type="match status" value="1"/>
</dbReference>
<dbReference type="InterPro" id="IPR020568">
    <property type="entry name" value="Ribosomal_Su5_D2-typ_SF"/>
</dbReference>
<dbReference type="InterPro" id="IPR000754">
    <property type="entry name" value="Ribosomal_uS9"/>
</dbReference>
<dbReference type="InterPro" id="IPR023035">
    <property type="entry name" value="Ribosomal_uS9_bac/plastid"/>
</dbReference>
<dbReference type="InterPro" id="IPR020574">
    <property type="entry name" value="Ribosomal_uS9_CS"/>
</dbReference>
<dbReference type="InterPro" id="IPR014721">
    <property type="entry name" value="Ribsml_uS5_D2-typ_fold_subgr"/>
</dbReference>
<dbReference type="NCBIfam" id="NF001099">
    <property type="entry name" value="PRK00132.1"/>
    <property type="match status" value="1"/>
</dbReference>
<dbReference type="PANTHER" id="PTHR21569">
    <property type="entry name" value="RIBOSOMAL PROTEIN S9"/>
    <property type="match status" value="1"/>
</dbReference>
<dbReference type="PANTHER" id="PTHR21569:SF1">
    <property type="entry name" value="SMALL RIBOSOMAL SUBUNIT PROTEIN US9M"/>
    <property type="match status" value="1"/>
</dbReference>
<dbReference type="Pfam" id="PF00380">
    <property type="entry name" value="Ribosomal_S9"/>
    <property type="match status" value="1"/>
</dbReference>
<dbReference type="SUPFAM" id="SSF54211">
    <property type="entry name" value="Ribosomal protein S5 domain 2-like"/>
    <property type="match status" value="1"/>
</dbReference>
<dbReference type="PROSITE" id="PS00360">
    <property type="entry name" value="RIBOSOMAL_S9"/>
    <property type="match status" value="1"/>
</dbReference>
<organism>
    <name type="scientific">Streptococcus pyogenes serotype M18 (strain MGAS8232)</name>
    <dbReference type="NCBI Taxonomy" id="186103"/>
    <lineage>
        <taxon>Bacteria</taxon>
        <taxon>Bacillati</taxon>
        <taxon>Bacillota</taxon>
        <taxon>Bacilli</taxon>
        <taxon>Lactobacillales</taxon>
        <taxon>Streptococcaceae</taxon>
        <taxon>Streptococcus</taxon>
    </lineage>
</organism>
<proteinExistence type="inferred from homology"/>
<reference key="1">
    <citation type="journal article" date="2002" name="Proc. Natl. Acad. Sci. U.S.A.">
        <title>Genome sequence and comparative microarray analysis of serotype M18 group A Streptococcus strains associated with acute rheumatic fever outbreaks.</title>
        <authorList>
            <person name="Smoot J.C."/>
            <person name="Barbian K.D."/>
            <person name="Van Gompel J.J."/>
            <person name="Smoot L.M."/>
            <person name="Chaussee M.S."/>
            <person name="Sylva G.L."/>
            <person name="Sturdevant D.E."/>
            <person name="Ricklefs S.M."/>
            <person name="Porcella S.F."/>
            <person name="Parkins L.D."/>
            <person name="Beres S.B."/>
            <person name="Campbell D.S."/>
            <person name="Smith T.M."/>
            <person name="Zhang Q."/>
            <person name="Kapur V."/>
            <person name="Daly J.A."/>
            <person name="Veasy L.G."/>
            <person name="Musser J.M."/>
        </authorList>
    </citation>
    <scope>NUCLEOTIDE SEQUENCE [LARGE SCALE GENOMIC DNA]</scope>
    <source>
        <strain>MGAS8232</strain>
    </source>
</reference>
<protein>
    <recommendedName>
        <fullName evidence="1">Small ribosomal subunit protein uS9</fullName>
    </recommendedName>
    <alternativeName>
        <fullName evidence="2">30S ribosomal protein S9</fullName>
    </alternativeName>
</protein>
<evidence type="ECO:0000255" key="1">
    <source>
        <dbReference type="HAMAP-Rule" id="MF_00532"/>
    </source>
</evidence>
<evidence type="ECO:0000305" key="2"/>
<comment type="similarity">
    <text evidence="1">Belongs to the universal ribosomal protein uS9 family.</text>
</comment>